<sequence length="449" mass="49766">MPAQTIEELIAVIKQRDGHMTEFRQAVEEVVDSLKVIFEREPKYIPIFERMLEPERVIIFRVPWMDDAGRINVNRGFRVQYNSALGPYKGGLRFHPSVNLSILKFLGFEQILKNSLTTLPMGGGKGGSDFDPKGKSDNEVMRFCQSFMTELQRHVGADTDVPAGDIGVGAREIGYLYGQYKRLRNEFTGVLTGKNVKWGGSFIRPEATGYGAVYFLEEMCKDNNTVIRGKNVLLSGSGNVAQFACEKLIQLGAKVLTFSDSNGTIVDKDGFNEEKLAHLMYLKNEKRGRVSEFKDKYPSVAYYEGKKPWECFEGQMDCIMPCATQNEVSGDDATRLVGLGLKFVAEGANMPSTAEAVHVYHAKGVMYGPAKASNAGGVSVSGLEMSQNSVRLQWTAEEVDQKLRGIMRGIFVACRDTAKKYGHPKNYQMGANIAGFLKVADSMIEQGCV</sequence>
<name>DHE4_GIAIN</name>
<comment type="catalytic activity">
    <reaction>
        <text>L-glutamate + NADP(+) + H2O = 2-oxoglutarate + NH4(+) + NADPH + H(+)</text>
        <dbReference type="Rhea" id="RHEA:11612"/>
        <dbReference type="ChEBI" id="CHEBI:15377"/>
        <dbReference type="ChEBI" id="CHEBI:15378"/>
        <dbReference type="ChEBI" id="CHEBI:16810"/>
        <dbReference type="ChEBI" id="CHEBI:28938"/>
        <dbReference type="ChEBI" id="CHEBI:29985"/>
        <dbReference type="ChEBI" id="CHEBI:57783"/>
        <dbReference type="ChEBI" id="CHEBI:58349"/>
        <dbReference type="EC" id="1.4.1.4"/>
    </reaction>
</comment>
<comment type="subunit">
    <text evidence="1">Homohexamer.</text>
</comment>
<comment type="similarity">
    <text evidence="3">Belongs to the Glu/Leu/Phe/Val dehydrogenases family.</text>
</comment>
<organism>
    <name type="scientific">Giardia intestinalis</name>
    <name type="common">Giardia lamblia</name>
    <dbReference type="NCBI Taxonomy" id="5741"/>
    <lineage>
        <taxon>Eukaryota</taxon>
        <taxon>Metamonada</taxon>
        <taxon>Diplomonadida</taxon>
        <taxon>Hexamitidae</taxon>
        <taxon>Giardiinae</taxon>
        <taxon>Giardia</taxon>
    </lineage>
</organism>
<keyword id="KW-0521">NADP</keyword>
<keyword id="KW-0560">Oxidoreductase</keyword>
<protein>
    <recommendedName>
        <fullName>NADP-specific glutamate dehydrogenase</fullName>
        <shortName>NADP-GDH</shortName>
        <ecNumber>1.4.1.4</ecNumber>
    </recommendedName>
    <alternativeName>
        <fullName>NADP-dependent glutamate dehydrogenase</fullName>
    </alternativeName>
</protein>
<accession>P28724</accession>
<accession>Q24961</accession>
<evidence type="ECO:0000250" key="1"/>
<evidence type="ECO:0000255" key="2">
    <source>
        <dbReference type="PROSITE-ProRule" id="PRU10011"/>
    </source>
</evidence>
<evidence type="ECO:0000305" key="3"/>
<feature type="chain" id="PRO_0000182786" description="NADP-specific glutamate dehydrogenase">
    <location>
        <begin position="1"/>
        <end position="449"/>
    </location>
</feature>
<feature type="active site" evidence="2">
    <location>
        <position position="125"/>
    </location>
</feature>
<feature type="sequence conflict" description="In Ref. 2; AAB05400." evidence="3" ref="2">
    <original>I</original>
    <variation>L</variation>
    <location>
        <position position="249"/>
    </location>
</feature>
<reference key="1">
    <citation type="journal article" date="1992" name="J. Biol. Chem.">
        <title>Isolation and characterization of a NADP-dependent glutamate dehydrogenase gene from the primitive eucaryote Giardia lamblia.</title>
        <authorList>
            <person name="Yee J."/>
            <person name="Dennis P.P."/>
        </authorList>
    </citation>
    <scope>NUCLEOTIDE SEQUENCE</scope>
</reference>
<reference key="2">
    <citation type="journal article" date="1996" name="Parasitology">
        <title>Molecular genetic analysis of Giardia intestinalis isolates at the glutamate dehydrogenase locus.</title>
        <authorList>
            <person name="Monis P.T."/>
            <person name="Mayrhofer G."/>
            <person name="Andrews R.H."/>
            <person name="Homan W.L."/>
            <person name="Limper L."/>
            <person name="Ey P.L."/>
        </authorList>
    </citation>
    <scope>NUCLEOTIDE SEQUENCE [GENOMIC DNA] OF 59-261</scope>
</reference>
<dbReference type="EC" id="1.4.1.4"/>
<dbReference type="EMBL" id="M84604">
    <property type="protein sequence ID" value="AAA29155.1"/>
    <property type="molecule type" value="mRNA"/>
</dbReference>
<dbReference type="EMBL" id="U47632">
    <property type="protein sequence ID" value="AAB05400.1"/>
    <property type="molecule type" value="Genomic_DNA"/>
</dbReference>
<dbReference type="PIR" id="A42489">
    <property type="entry name" value="A42489"/>
</dbReference>
<dbReference type="SMR" id="P28724"/>
<dbReference type="VEuPathDB" id="GiardiaDB:DHA2_21942"/>
<dbReference type="VEuPathDB" id="GiardiaDB:GL50581_4496"/>
<dbReference type="VEuPathDB" id="GiardiaDB:GL50803_0021942"/>
<dbReference type="VEuPathDB" id="GiardiaDB:QR46_0935"/>
<dbReference type="eggNOG" id="KOG2250">
    <property type="taxonomic scope" value="Eukaryota"/>
</dbReference>
<dbReference type="BRENDA" id="1.4.1.4">
    <property type="organism ID" value="2401"/>
</dbReference>
<dbReference type="GO" id="GO:0005829">
    <property type="term" value="C:cytosol"/>
    <property type="evidence" value="ECO:0007669"/>
    <property type="project" value="TreeGrafter"/>
</dbReference>
<dbReference type="GO" id="GO:0004354">
    <property type="term" value="F:glutamate dehydrogenase (NADP+) activity"/>
    <property type="evidence" value="ECO:0007669"/>
    <property type="project" value="UniProtKB-EC"/>
</dbReference>
<dbReference type="GO" id="GO:0006537">
    <property type="term" value="P:glutamate biosynthetic process"/>
    <property type="evidence" value="ECO:0007669"/>
    <property type="project" value="TreeGrafter"/>
</dbReference>
<dbReference type="CDD" id="cd05313">
    <property type="entry name" value="NAD_bind_2_Glu_DH"/>
    <property type="match status" value="1"/>
</dbReference>
<dbReference type="FunFam" id="1.10.285.10:FF:000001">
    <property type="entry name" value="Glutamate dehydrogenase"/>
    <property type="match status" value="1"/>
</dbReference>
<dbReference type="FunFam" id="1.10.285.10:FF:000009">
    <property type="entry name" value="Glutamate dehydrogenase"/>
    <property type="match status" value="1"/>
</dbReference>
<dbReference type="FunFam" id="3.40.50.10860:FF:000002">
    <property type="entry name" value="Glutamate dehydrogenase"/>
    <property type="match status" value="1"/>
</dbReference>
<dbReference type="FunFam" id="3.40.50.720:FF:000030">
    <property type="entry name" value="Glutamate dehydrogenase"/>
    <property type="match status" value="1"/>
</dbReference>
<dbReference type="Gene3D" id="1.10.285.10">
    <property type="entry name" value="Glutamate Dehydrogenase, chain A, domain 3"/>
    <property type="match status" value="2"/>
</dbReference>
<dbReference type="Gene3D" id="3.40.50.10860">
    <property type="entry name" value="Leucine Dehydrogenase, chain A, domain 1"/>
    <property type="match status" value="1"/>
</dbReference>
<dbReference type="Gene3D" id="3.40.50.720">
    <property type="entry name" value="NAD(P)-binding Rossmann-like Domain"/>
    <property type="match status" value="1"/>
</dbReference>
<dbReference type="InterPro" id="IPR046346">
    <property type="entry name" value="Aminoacid_DH-like_N_sf"/>
</dbReference>
<dbReference type="InterPro" id="IPR006095">
    <property type="entry name" value="Glu/Leu/Phe/Val/Trp_DH"/>
</dbReference>
<dbReference type="InterPro" id="IPR006096">
    <property type="entry name" value="Glu/Leu/Phe/Val/Trp_DH_C"/>
</dbReference>
<dbReference type="InterPro" id="IPR006097">
    <property type="entry name" value="Glu/Leu/Phe/Val/Trp_DH_dimer"/>
</dbReference>
<dbReference type="InterPro" id="IPR033524">
    <property type="entry name" value="Glu/Leu/Phe/Val_DH_AS"/>
</dbReference>
<dbReference type="InterPro" id="IPR014362">
    <property type="entry name" value="Glu_DH"/>
</dbReference>
<dbReference type="InterPro" id="IPR050724">
    <property type="entry name" value="Glu_Leu_Phe_Val_DH"/>
</dbReference>
<dbReference type="InterPro" id="IPR036291">
    <property type="entry name" value="NAD(P)-bd_dom_sf"/>
</dbReference>
<dbReference type="InterPro" id="IPR033922">
    <property type="entry name" value="NAD_bind_Glu_DH"/>
</dbReference>
<dbReference type="NCBIfam" id="NF006929">
    <property type="entry name" value="PRK09414.1"/>
    <property type="match status" value="1"/>
</dbReference>
<dbReference type="PANTHER" id="PTHR43571">
    <property type="entry name" value="NADP-SPECIFIC GLUTAMATE DEHYDROGENASE 1-RELATED"/>
    <property type="match status" value="1"/>
</dbReference>
<dbReference type="PANTHER" id="PTHR43571:SF1">
    <property type="entry name" value="NADP-SPECIFIC GLUTAMATE DEHYDROGENASE 1-RELATED"/>
    <property type="match status" value="1"/>
</dbReference>
<dbReference type="Pfam" id="PF00208">
    <property type="entry name" value="ELFV_dehydrog"/>
    <property type="match status" value="1"/>
</dbReference>
<dbReference type="Pfam" id="PF02812">
    <property type="entry name" value="ELFV_dehydrog_N"/>
    <property type="match status" value="1"/>
</dbReference>
<dbReference type="PIRSF" id="PIRSF000185">
    <property type="entry name" value="Glu_DH"/>
    <property type="match status" value="1"/>
</dbReference>
<dbReference type="PRINTS" id="PR00082">
    <property type="entry name" value="GLFDHDRGNASE"/>
</dbReference>
<dbReference type="SMART" id="SM00839">
    <property type="entry name" value="ELFV_dehydrog"/>
    <property type="match status" value="1"/>
</dbReference>
<dbReference type="SUPFAM" id="SSF53223">
    <property type="entry name" value="Aminoacid dehydrogenase-like, N-terminal domain"/>
    <property type="match status" value="1"/>
</dbReference>
<dbReference type="SUPFAM" id="SSF51735">
    <property type="entry name" value="NAD(P)-binding Rossmann-fold domains"/>
    <property type="match status" value="1"/>
</dbReference>
<dbReference type="PROSITE" id="PS00074">
    <property type="entry name" value="GLFV_DEHYDROGENASE"/>
    <property type="match status" value="1"/>
</dbReference>
<proteinExistence type="evidence at transcript level"/>